<comment type="function">
    <text evidence="1">Plays a role in the expression of late genes.</text>
</comment>
<comment type="subunit">
    <text evidence="1">Interacts with ORF34.</text>
</comment>
<comment type="subcellular location">
    <subcellularLocation>
        <location evidence="1">Host nucleus</location>
    </subcellularLocation>
    <subcellularLocation>
        <location evidence="1">Host cytoplasm</location>
    </subcellularLocation>
    <text evidence="1">Mainly localizes in host nucleus and partially in host cytosol.</text>
</comment>
<comment type="similarity">
    <text evidence="2">Belongs to the lymphocryptovirus BTRF1 family.</text>
</comment>
<organismHost>
    <name type="scientific">Homo sapiens</name>
    <name type="common">Human</name>
    <dbReference type="NCBI Taxonomy" id="9606"/>
</organismHost>
<organism>
    <name type="scientific">Human herpesvirus 8 type P (isolate GK18)</name>
    <name type="common">HHV-8</name>
    <name type="synonym">Kaposi's sarcoma-associated herpesvirus</name>
    <dbReference type="NCBI Taxonomy" id="868565"/>
    <lineage>
        <taxon>Viruses</taxon>
        <taxon>Duplodnaviria</taxon>
        <taxon>Heunggongvirae</taxon>
        <taxon>Peploviricota</taxon>
        <taxon>Herviviricetes</taxon>
        <taxon>Herpesvirales</taxon>
        <taxon>Orthoherpesviridae</taxon>
        <taxon>Gammaherpesvirinae</taxon>
        <taxon>Rhadinovirus</taxon>
        <taxon>Rhadinovirus humangamma8</taxon>
        <taxon>Human herpesvirus 8</taxon>
    </lineage>
</organism>
<sequence length="404" mass="45172">MLRVPDVKASLVEGAARLSTGERVFHVLTSPAVAAMVGVSNPEVPMPLLFEKFGTPDSSTLPLYAARHPELSLLRIMLSPHPYALRSHLCVGEETASLGVYLHSKPVVRGHEFEDTQILPECRLAITSDQSYTNFKIIDLPAGCRRVPIHAANKRVVIDEAANRIKVFDPESPLPRHPITPRAGQTRSILKHNIAQVCERDIVSLNTDNEAASMFYMIGLRRPRLGESPVCDFNTVTIMERANNSITFLPKLKLNRLQHLFLKHVLLRSMGLENIVSCFSSLYGAELAPAKTHEREFFGALLERLKRRVEDAVFCLNTIEDFPFREPIRQPPDCSKVLIEAMEKYFMMCSPKDRQSAAWLGAGVVELICDGNPLSEVLGFLAKYMPIQKECTGNLLKIYALLTV</sequence>
<dbReference type="EMBL" id="AF148805">
    <property type="protein sequence ID" value="ABD28874.1"/>
    <property type="molecule type" value="Genomic_DNA"/>
</dbReference>
<dbReference type="RefSeq" id="YP_001129376.1">
    <property type="nucleotide sequence ID" value="NC_009333.1"/>
</dbReference>
<dbReference type="BioGRID" id="1777006">
    <property type="interactions" value="4"/>
</dbReference>
<dbReference type="DNASU" id="4961503"/>
<dbReference type="GeneID" id="4961503"/>
<dbReference type="KEGG" id="vg:4961503"/>
<dbReference type="Proteomes" id="UP000000942">
    <property type="component" value="Segment"/>
</dbReference>
<dbReference type="GO" id="GO:0030430">
    <property type="term" value="C:host cell cytoplasm"/>
    <property type="evidence" value="ECO:0007669"/>
    <property type="project" value="UniProtKB-SubCell"/>
</dbReference>
<dbReference type="GO" id="GO:0042025">
    <property type="term" value="C:host cell nucleus"/>
    <property type="evidence" value="ECO:0007669"/>
    <property type="project" value="UniProtKB-SubCell"/>
</dbReference>
<dbReference type="InterPro" id="IPR006772">
    <property type="entry name" value="Herpes_BTRF1"/>
</dbReference>
<dbReference type="Pfam" id="PF04682">
    <property type="entry name" value="Herpes_BTRF1"/>
    <property type="match status" value="1"/>
</dbReference>
<name>ORF23_HHV8P</name>
<accession>F5HIM6</accession>
<reference key="1">
    <citation type="journal article" date="1999" name="J. Virol.">
        <title>Identification of a spliced gene from Kaposi's sarcoma-associated herpesvirus encoding a protein with similarities to latent membrane proteins 1 and 2A of Epstein-Barr virus.</title>
        <authorList>
            <person name="Glenn M."/>
            <person name="Rainbow L."/>
            <person name="Aurade F."/>
            <person name="Davison A."/>
            <person name="Schulz T.F."/>
        </authorList>
    </citation>
    <scope>NUCLEOTIDE SEQUENCE [LARGE SCALE GENOMIC DNA]</scope>
</reference>
<reference key="2">
    <citation type="journal article" date="2006" name="J. Gen. Virol.">
        <title>Kaposi's sarcoma-associated herpesvirus immune modulation: an overview.</title>
        <authorList>
            <person name="Rezaee S.A.R."/>
            <person name="Cunningham C."/>
            <person name="Davison A.J."/>
            <person name="Blackbourn D.J."/>
        </authorList>
    </citation>
    <scope>NUCLEOTIDE SEQUENCE [LARGE SCALE GENOMIC DNA]</scope>
</reference>
<reference key="3">
    <citation type="journal article" date="2017" name="Sci. Rep.">
        <title>Kaposi's sarcoma-associated herpesvirus ORF34 is essential for late gene expression and virus production.</title>
        <authorList>
            <person name="Nishimura M."/>
            <person name="Watanabe T."/>
            <person name="Yagi S."/>
            <person name="Yamanaka T."/>
            <person name="Fujimuro M."/>
        </authorList>
    </citation>
    <scope>FUNCTION</scope>
    <scope>INTERACTION WITH ORF34</scope>
    <scope>SUBCELLULAR LOCATION</scope>
</reference>
<gene>
    <name type="primary">ORF23</name>
</gene>
<evidence type="ECO:0000269" key="1">
    <source>
    </source>
</evidence>
<evidence type="ECO:0000305" key="2"/>
<protein>
    <recommendedName>
        <fullName>Protein ORF23</fullName>
    </recommendedName>
</protein>
<feature type="chain" id="PRO_0000423796" description="Protein ORF23">
    <location>
        <begin position="1"/>
        <end position="404"/>
    </location>
</feature>
<proteinExistence type="evidence at protein level"/>
<keyword id="KW-1035">Host cytoplasm</keyword>
<keyword id="KW-1048">Host nucleus</keyword>
<keyword id="KW-1185">Reference proteome</keyword>